<feature type="transit peptide" description="Chloroplast" evidence="2">
    <location>
        <begin position="1"/>
        <end position="69"/>
    </location>
</feature>
<feature type="chain" id="PRO_0000002894" description="Plastocyanin B, chloroplastic">
    <location>
        <begin position="70"/>
        <end position="168"/>
    </location>
</feature>
<feature type="domain" description="Plastocyanin-like">
    <location>
        <begin position="70"/>
        <end position="168"/>
    </location>
</feature>
<feature type="binding site" evidence="1">
    <location>
        <position position="106"/>
    </location>
    <ligand>
        <name>Cu cation</name>
        <dbReference type="ChEBI" id="CHEBI:23378"/>
    </ligand>
</feature>
<feature type="binding site" evidence="1">
    <location>
        <position position="153"/>
    </location>
    <ligand>
        <name>Cu cation</name>
        <dbReference type="ChEBI" id="CHEBI:23378"/>
    </ligand>
</feature>
<feature type="binding site" evidence="1">
    <location>
        <position position="156"/>
    </location>
    <ligand>
        <name>Cu cation</name>
        <dbReference type="ChEBI" id="CHEBI:23378"/>
    </ligand>
</feature>
<feature type="binding site" evidence="1">
    <location>
        <position position="161"/>
    </location>
    <ligand>
        <name>Cu cation</name>
        <dbReference type="ChEBI" id="CHEBI:23378"/>
    </ligand>
</feature>
<feature type="strand" evidence="4">
    <location>
        <begin position="71"/>
        <end position="75"/>
    </location>
</feature>
<feature type="strand" evidence="4">
    <location>
        <begin position="83"/>
        <end position="91"/>
    </location>
</feature>
<feature type="strand" evidence="4">
    <location>
        <begin position="95"/>
        <end position="100"/>
    </location>
</feature>
<feature type="strand" evidence="4">
    <location>
        <begin position="102"/>
        <end position="104"/>
    </location>
</feature>
<feature type="helix" evidence="4">
    <location>
        <begin position="121"/>
        <end position="124"/>
    </location>
</feature>
<feature type="strand" evidence="4">
    <location>
        <begin position="138"/>
        <end position="142"/>
    </location>
</feature>
<feature type="strand" evidence="4">
    <location>
        <begin position="147"/>
        <end position="152"/>
    </location>
</feature>
<feature type="turn" evidence="4">
    <location>
        <begin position="154"/>
        <end position="156"/>
    </location>
</feature>
<feature type="helix" evidence="4">
    <location>
        <begin position="157"/>
        <end position="159"/>
    </location>
</feature>
<feature type="strand" evidence="4">
    <location>
        <begin position="162"/>
        <end position="168"/>
    </location>
</feature>
<proteinExistence type="evidence at protein level"/>
<evidence type="ECO:0000269" key="1">
    <source>
    </source>
</evidence>
<evidence type="ECO:0000269" key="2">
    <source ref="2"/>
</evidence>
<evidence type="ECO:0000305" key="3"/>
<evidence type="ECO:0007829" key="4">
    <source>
        <dbReference type="PDB" id="4DP1"/>
    </source>
</evidence>
<reference key="1">
    <citation type="submission" date="1995-08" db="EMBL/GenBank/DDBJ databases">
        <authorList>
            <person name="Reichert J."/>
            <person name="Jenzelewski V."/>
            <person name="Haehnel W."/>
        </authorList>
    </citation>
    <scope>NUCLEOTIDE SEQUENCE [MRNA]</scope>
    <source>
        <strain>cv. Italica</strain>
        <tissue>Leaf</tissue>
    </source>
</reference>
<reference key="2">
    <citation type="journal article" date="1987" name="FEBS Lett.">
        <title>Complete amino acid sequence of poplar plastocyanin b.</title>
        <authorList>
            <person name="Dimitrov M.I."/>
            <person name="Egorov C.A."/>
            <person name="Donchev A.A."/>
            <person name="Atanasov B.P."/>
        </authorList>
    </citation>
    <scope>PROTEIN SEQUENCE OF 70-168</scope>
    <scope>SUBCELLULAR LOCATION</scope>
    <source>
        <strain>cv. Italica</strain>
    </source>
</reference>
<reference key="3">
    <citation type="journal article" date="2012" name="J. Inorg. Biochem.">
        <title>Structural comparison of the poplar plastocyanin isoforms PCa and PCb sheds new light on the role of the copper site geometry in interactions with redox partners in oxygenic photosynthesis.</title>
        <authorList>
            <person name="Kachalova G.S."/>
            <person name="Shosheva A.C."/>
            <person name="Bourenkov G.P."/>
            <person name="Donchev A.A."/>
            <person name="Dimitrov M.I."/>
            <person name="Bartunik H.D."/>
        </authorList>
    </citation>
    <scope>X-RAY CRYSTALLOGRAPHY (1.35 ANGSTROMS) OF 70-168 IN COMPLEX WITH COPPER</scope>
    <scope>FUNCTION</scope>
    <scope>COFACTOR</scope>
    <scope>SUBCELLULAR LOCATION</scope>
    <source>
        <strain>cv. Italica</strain>
    </source>
</reference>
<gene>
    <name type="primary">PETE</name>
</gene>
<comment type="function">
    <text evidence="1">Participates in electron transfer between P700 and the cytochrome b6-f complex in photosystem I.</text>
</comment>
<comment type="cofactor">
    <cofactor evidence="1">
        <name>Cu(2+)</name>
        <dbReference type="ChEBI" id="CHEBI:29036"/>
    </cofactor>
    <text>The crystal structure with reduced Cu(1+) has also been determined (PubMed:22883960).</text>
</comment>
<comment type="subcellular location">
    <subcellularLocation>
        <location evidence="1 2">Plastid</location>
        <location evidence="1 2">Chloroplast thylakoid membrane</location>
        <topology evidence="1">Peripheral membrane protein</topology>
        <orientation evidence="1">Lumenal side</orientation>
    </subcellularLocation>
    <text>Loosely bound to the inner thylakoid membrane surface in chloroplasts (PubMed:22883960).</text>
</comment>
<comment type="similarity">
    <text evidence="3">Belongs to the plastocyanin family.</text>
</comment>
<sequence length="168" mass="16981">MAAVTSAAVSIPSFTGLKAASASNAKVSASAKVSASPLPRLSIKASLKEVGAAVVATAASAMIASNAMAVDVLLGADDGSLAFVPSEFSVPAGEKIVFKNNAGFPHNVLFDEDAVPSGVDVSKISMSEEDLLNAKGETFEVALSDKGEYTFYCSPHQGAGMVGKVIVN</sequence>
<accession>P11970</accession>
<organism>
    <name type="scientific">Populus nigra</name>
    <name type="common">Lombardy poplar</name>
    <dbReference type="NCBI Taxonomy" id="3691"/>
    <lineage>
        <taxon>Eukaryota</taxon>
        <taxon>Viridiplantae</taxon>
        <taxon>Streptophyta</taxon>
        <taxon>Embryophyta</taxon>
        <taxon>Tracheophyta</taxon>
        <taxon>Spermatophyta</taxon>
        <taxon>Magnoliopsida</taxon>
        <taxon>eudicotyledons</taxon>
        <taxon>Gunneridae</taxon>
        <taxon>Pentapetalae</taxon>
        <taxon>rosids</taxon>
        <taxon>fabids</taxon>
        <taxon>Malpighiales</taxon>
        <taxon>Salicaceae</taxon>
        <taxon>Saliceae</taxon>
        <taxon>Populus</taxon>
    </lineage>
</organism>
<keyword id="KW-0002">3D-structure</keyword>
<keyword id="KW-0150">Chloroplast</keyword>
<keyword id="KW-0186">Copper</keyword>
<keyword id="KW-0903">Direct protein sequencing</keyword>
<keyword id="KW-0249">Electron transport</keyword>
<keyword id="KW-0472">Membrane</keyword>
<keyword id="KW-0479">Metal-binding</keyword>
<keyword id="KW-0934">Plastid</keyword>
<keyword id="KW-0793">Thylakoid</keyword>
<keyword id="KW-0809">Transit peptide</keyword>
<keyword id="KW-0813">Transport</keyword>
<dbReference type="EMBL" id="Z50186">
    <property type="protein sequence ID" value="CAA90565.1"/>
    <property type="molecule type" value="mRNA"/>
</dbReference>
<dbReference type="PIR" id="S00210">
    <property type="entry name" value="S00210"/>
</dbReference>
<dbReference type="PIR" id="S58208">
    <property type="entry name" value="S58208"/>
</dbReference>
<dbReference type="PDB" id="4DP0">
    <property type="method" value="X-ray"/>
    <property type="resolution" value="1.50 A"/>
    <property type="chains" value="X=70-168"/>
</dbReference>
<dbReference type="PDB" id="4DP1">
    <property type="method" value="X-ray"/>
    <property type="resolution" value="1.35 A"/>
    <property type="chains" value="X=70-168"/>
</dbReference>
<dbReference type="PDB" id="4DP2">
    <property type="method" value="X-ray"/>
    <property type="resolution" value="1.80 A"/>
    <property type="chains" value="X=70-168"/>
</dbReference>
<dbReference type="PDB" id="4DP4">
    <property type="method" value="X-ray"/>
    <property type="resolution" value="1.54 A"/>
    <property type="chains" value="X=70-168"/>
</dbReference>
<dbReference type="PDB" id="4DP5">
    <property type="method" value="X-ray"/>
    <property type="resolution" value="1.88 A"/>
    <property type="chains" value="X=70-168"/>
</dbReference>
<dbReference type="PDB" id="4DP6">
    <property type="method" value="X-ray"/>
    <property type="resolution" value="1.67 A"/>
    <property type="chains" value="X=70-168"/>
</dbReference>
<dbReference type="PDBsum" id="4DP0"/>
<dbReference type="PDBsum" id="4DP1"/>
<dbReference type="PDBsum" id="4DP2"/>
<dbReference type="PDBsum" id="4DP4"/>
<dbReference type="PDBsum" id="4DP5"/>
<dbReference type="PDBsum" id="4DP6"/>
<dbReference type="SMR" id="P11970"/>
<dbReference type="EvolutionaryTrace" id="P11970"/>
<dbReference type="GO" id="GO:0009543">
    <property type="term" value="C:chloroplast thylakoid lumen"/>
    <property type="evidence" value="ECO:0007669"/>
    <property type="project" value="TreeGrafter"/>
</dbReference>
<dbReference type="GO" id="GO:0009535">
    <property type="term" value="C:chloroplast thylakoid membrane"/>
    <property type="evidence" value="ECO:0007669"/>
    <property type="project" value="UniProtKB-SubCell"/>
</dbReference>
<dbReference type="GO" id="GO:0005507">
    <property type="term" value="F:copper ion binding"/>
    <property type="evidence" value="ECO:0007669"/>
    <property type="project" value="InterPro"/>
</dbReference>
<dbReference type="GO" id="GO:0046028">
    <property type="term" value="F:electron transporter, transferring electrons from cytochrome b6/f complex of photosystem II activity"/>
    <property type="evidence" value="ECO:0007669"/>
    <property type="project" value="TreeGrafter"/>
</dbReference>
<dbReference type="CDD" id="cd04219">
    <property type="entry name" value="Plastocyanin"/>
    <property type="match status" value="1"/>
</dbReference>
<dbReference type="Gene3D" id="2.60.40.420">
    <property type="entry name" value="Cupredoxins - blue copper proteins"/>
    <property type="match status" value="1"/>
</dbReference>
<dbReference type="InterPro" id="IPR000923">
    <property type="entry name" value="BlueCu_1"/>
</dbReference>
<dbReference type="InterPro" id="IPR028871">
    <property type="entry name" value="BlueCu_1_BS"/>
</dbReference>
<dbReference type="InterPro" id="IPR001235">
    <property type="entry name" value="Copper_blue_Plastocyanin"/>
</dbReference>
<dbReference type="InterPro" id="IPR008972">
    <property type="entry name" value="Cupredoxin"/>
</dbReference>
<dbReference type="InterPro" id="IPR002387">
    <property type="entry name" value="Plastocyanin"/>
</dbReference>
<dbReference type="NCBIfam" id="TIGR02656">
    <property type="entry name" value="cyanin_plasto"/>
    <property type="match status" value="1"/>
</dbReference>
<dbReference type="PANTHER" id="PTHR34192">
    <property type="entry name" value="PLASTOCYANIN MAJOR ISOFORM, CHLOROPLASTIC-RELATED"/>
    <property type="match status" value="1"/>
</dbReference>
<dbReference type="PANTHER" id="PTHR34192:SF10">
    <property type="entry name" value="PLASTOCYANIN MAJOR ISOFORM, CHLOROPLASTIC-RELATED"/>
    <property type="match status" value="1"/>
</dbReference>
<dbReference type="Pfam" id="PF00127">
    <property type="entry name" value="Copper-bind"/>
    <property type="match status" value="1"/>
</dbReference>
<dbReference type="PRINTS" id="PR00156">
    <property type="entry name" value="COPPERBLUE"/>
</dbReference>
<dbReference type="PRINTS" id="PR00157">
    <property type="entry name" value="PLASTOCYANIN"/>
</dbReference>
<dbReference type="SUPFAM" id="SSF49503">
    <property type="entry name" value="Cupredoxins"/>
    <property type="match status" value="1"/>
</dbReference>
<dbReference type="PROSITE" id="PS00196">
    <property type="entry name" value="COPPER_BLUE"/>
    <property type="match status" value="1"/>
</dbReference>
<name>PLAS2_POPNI</name>
<protein>
    <recommendedName>
        <fullName>Plastocyanin B, chloroplastic</fullName>
        <shortName>PCb</shortName>
    </recommendedName>
</protein>